<protein>
    <recommendedName>
        <fullName evidence="1">Mannitol-1-phosphate 5-dehydrogenase</fullName>
        <ecNumber evidence="1">1.1.1.17</ecNumber>
    </recommendedName>
</protein>
<comment type="catalytic activity">
    <reaction evidence="1">
        <text>D-mannitol 1-phosphate + NAD(+) = beta-D-fructose 6-phosphate + NADH + H(+)</text>
        <dbReference type="Rhea" id="RHEA:19661"/>
        <dbReference type="ChEBI" id="CHEBI:15378"/>
        <dbReference type="ChEBI" id="CHEBI:57540"/>
        <dbReference type="ChEBI" id="CHEBI:57634"/>
        <dbReference type="ChEBI" id="CHEBI:57945"/>
        <dbReference type="ChEBI" id="CHEBI:61381"/>
        <dbReference type="EC" id="1.1.1.17"/>
    </reaction>
</comment>
<comment type="similarity">
    <text evidence="1">Belongs to the mannitol dehydrogenase family.</text>
</comment>
<feature type="chain" id="PRO_1000124394" description="Mannitol-1-phosphate 5-dehydrogenase">
    <location>
        <begin position="1"/>
        <end position="378"/>
    </location>
</feature>
<feature type="binding site" evidence="1">
    <location>
        <begin position="4"/>
        <end position="15"/>
    </location>
    <ligand>
        <name>NAD(+)</name>
        <dbReference type="ChEBI" id="CHEBI:57540"/>
    </ligand>
</feature>
<proteinExistence type="inferred from homology"/>
<dbReference type="EC" id="1.1.1.17" evidence="1"/>
<dbReference type="EMBL" id="CP000919">
    <property type="protein sequence ID" value="ACO18683.1"/>
    <property type="molecule type" value="Genomic_DNA"/>
</dbReference>
<dbReference type="RefSeq" id="WP_000682962.1">
    <property type="nucleotide sequence ID" value="NC_012466.1"/>
</dbReference>
<dbReference type="SMR" id="C1CCG5"/>
<dbReference type="KEGG" id="sjj:SPJ_0386"/>
<dbReference type="HOGENOM" id="CLU_036089_2_0_9"/>
<dbReference type="Proteomes" id="UP000002206">
    <property type="component" value="Chromosome"/>
</dbReference>
<dbReference type="GO" id="GO:0005829">
    <property type="term" value="C:cytosol"/>
    <property type="evidence" value="ECO:0007669"/>
    <property type="project" value="TreeGrafter"/>
</dbReference>
<dbReference type="GO" id="GO:0008926">
    <property type="term" value="F:mannitol-1-phosphate 5-dehydrogenase activity"/>
    <property type="evidence" value="ECO:0007669"/>
    <property type="project" value="UniProtKB-UniRule"/>
</dbReference>
<dbReference type="GO" id="GO:0019592">
    <property type="term" value="P:mannitol catabolic process"/>
    <property type="evidence" value="ECO:0007669"/>
    <property type="project" value="TreeGrafter"/>
</dbReference>
<dbReference type="FunFam" id="1.10.1040.10:FF:000042">
    <property type="entry name" value="Mannitol-1-phosphate 5-dehydrogenase"/>
    <property type="match status" value="1"/>
</dbReference>
<dbReference type="FunFam" id="3.40.50.720:FF:000586">
    <property type="entry name" value="Mannitol-1-phosphate 5-dehydrogenase"/>
    <property type="match status" value="1"/>
</dbReference>
<dbReference type="Gene3D" id="1.10.1040.10">
    <property type="entry name" value="N-(1-d-carboxylethyl)-l-norvaline Dehydrogenase, domain 2"/>
    <property type="match status" value="1"/>
</dbReference>
<dbReference type="Gene3D" id="3.40.50.720">
    <property type="entry name" value="NAD(P)-binding Rossmann-like Domain"/>
    <property type="match status" value="1"/>
</dbReference>
<dbReference type="HAMAP" id="MF_00196">
    <property type="entry name" value="Mannitol_dehydrog"/>
    <property type="match status" value="1"/>
</dbReference>
<dbReference type="InterPro" id="IPR008927">
    <property type="entry name" value="6-PGluconate_DH-like_C_sf"/>
</dbReference>
<dbReference type="InterPro" id="IPR013328">
    <property type="entry name" value="6PGD_dom2"/>
</dbReference>
<dbReference type="InterPro" id="IPR023028">
    <property type="entry name" value="Mannitol_1_phos_5_DH"/>
</dbReference>
<dbReference type="InterPro" id="IPR000669">
    <property type="entry name" value="Mannitol_DH"/>
</dbReference>
<dbReference type="InterPro" id="IPR013118">
    <property type="entry name" value="Mannitol_DH_C"/>
</dbReference>
<dbReference type="InterPro" id="IPR023027">
    <property type="entry name" value="Mannitol_DH_CS"/>
</dbReference>
<dbReference type="InterPro" id="IPR013131">
    <property type="entry name" value="Mannitol_DH_N"/>
</dbReference>
<dbReference type="InterPro" id="IPR036291">
    <property type="entry name" value="NAD(P)-bd_dom_sf"/>
</dbReference>
<dbReference type="NCBIfam" id="NF002647">
    <property type="entry name" value="PRK02318.1-3"/>
    <property type="match status" value="1"/>
</dbReference>
<dbReference type="NCBIfam" id="NF002652">
    <property type="entry name" value="PRK02318.2-5"/>
    <property type="match status" value="1"/>
</dbReference>
<dbReference type="PANTHER" id="PTHR30524:SF0">
    <property type="entry name" value="ALTRONATE OXIDOREDUCTASE-RELATED"/>
    <property type="match status" value="1"/>
</dbReference>
<dbReference type="PANTHER" id="PTHR30524">
    <property type="entry name" value="MANNITOL-1-PHOSPHATE 5-DEHYDROGENASE"/>
    <property type="match status" value="1"/>
</dbReference>
<dbReference type="Pfam" id="PF01232">
    <property type="entry name" value="Mannitol_dh"/>
    <property type="match status" value="1"/>
</dbReference>
<dbReference type="Pfam" id="PF08125">
    <property type="entry name" value="Mannitol_dh_C"/>
    <property type="match status" value="1"/>
</dbReference>
<dbReference type="PRINTS" id="PR00084">
    <property type="entry name" value="MTLDHDRGNASE"/>
</dbReference>
<dbReference type="SUPFAM" id="SSF48179">
    <property type="entry name" value="6-phosphogluconate dehydrogenase C-terminal domain-like"/>
    <property type="match status" value="1"/>
</dbReference>
<dbReference type="SUPFAM" id="SSF51735">
    <property type="entry name" value="NAD(P)-binding Rossmann-fold domains"/>
    <property type="match status" value="1"/>
</dbReference>
<dbReference type="PROSITE" id="PS00974">
    <property type="entry name" value="MANNITOL_DHGENASE"/>
    <property type="match status" value="1"/>
</dbReference>
<gene>
    <name evidence="1" type="primary">mtlD</name>
    <name type="ordered locus">SPJ_0386</name>
</gene>
<keyword id="KW-0520">NAD</keyword>
<keyword id="KW-0560">Oxidoreductase</keyword>
<organism>
    <name type="scientific">Streptococcus pneumoniae (strain JJA)</name>
    <dbReference type="NCBI Taxonomy" id="488222"/>
    <lineage>
        <taxon>Bacteria</taxon>
        <taxon>Bacillati</taxon>
        <taxon>Bacillota</taxon>
        <taxon>Bacilli</taxon>
        <taxon>Lactobacillales</taxon>
        <taxon>Streptococcaceae</taxon>
        <taxon>Streptococcus</taxon>
    </lineage>
</organism>
<name>MTLD_STRZJ</name>
<accession>C1CCG5</accession>
<sequence>MKHSVHFGAGNIGRGFIGEILFKNDFHIDFVDVNNQIIHALNEKGKYEIEIAQKGQSRIEVTNVAGINSKEHPEQVIEAIQKTDIITTAIGPNILPFIAELLAKGIEARRVAGNTQALDVMACENMIGGSQFLYQEVKKYLSPEGLTFADNYIGFPNAAVDRIVPTQSHEDSLFVMVEPFNEWVVETKRLKNPDLRLEDVHYEEDLEPFIERKLFSVNSGHATSAYIGAHYGAKTILEALQNPNIKSRIESVLAEIRSLLIAKWNFDKKELENYHKVIIERFENPFIVDEVSRVARTPIRKLGYNERFIRPIRELKELSLSYKNLLKTVGYAFDYRDVNDEESIRLGELLAKQSVKDVVIQVTGLDDQELIEQIVEYI</sequence>
<evidence type="ECO:0000255" key="1">
    <source>
        <dbReference type="HAMAP-Rule" id="MF_00196"/>
    </source>
</evidence>
<reference key="1">
    <citation type="journal article" date="2010" name="Genome Biol.">
        <title>Structure and dynamics of the pan-genome of Streptococcus pneumoniae and closely related species.</title>
        <authorList>
            <person name="Donati C."/>
            <person name="Hiller N.L."/>
            <person name="Tettelin H."/>
            <person name="Muzzi A."/>
            <person name="Croucher N.J."/>
            <person name="Angiuoli S.V."/>
            <person name="Oggioni M."/>
            <person name="Dunning Hotopp J.C."/>
            <person name="Hu F.Z."/>
            <person name="Riley D.R."/>
            <person name="Covacci A."/>
            <person name="Mitchell T.J."/>
            <person name="Bentley S.D."/>
            <person name="Kilian M."/>
            <person name="Ehrlich G.D."/>
            <person name="Rappuoli R."/>
            <person name="Moxon E.R."/>
            <person name="Masignani V."/>
        </authorList>
    </citation>
    <scope>NUCLEOTIDE SEQUENCE [LARGE SCALE GENOMIC DNA]</scope>
    <source>
        <strain>JJA</strain>
    </source>
</reference>